<dbReference type="EMBL" id="X02894">
    <property type="protein sequence ID" value="CAA26653.1"/>
    <property type="molecule type" value="mRNA"/>
</dbReference>
<dbReference type="PIR" id="A02953">
    <property type="entry name" value="KRXL2A"/>
</dbReference>
<dbReference type="SMR" id="P04266"/>
<dbReference type="AGR" id="Xenbase:XB-GENE-876896"/>
<dbReference type="Xenbase" id="XB-GENE-876896">
    <property type="gene designation" value="krt78.8.L"/>
</dbReference>
<dbReference type="Proteomes" id="UP000186698">
    <property type="component" value="Unplaced"/>
</dbReference>
<dbReference type="GO" id="GO:0005615">
    <property type="term" value="C:extracellular space"/>
    <property type="evidence" value="ECO:0007669"/>
    <property type="project" value="TreeGrafter"/>
</dbReference>
<dbReference type="GO" id="GO:0045095">
    <property type="term" value="C:keratin filament"/>
    <property type="evidence" value="ECO:0000318"/>
    <property type="project" value="GO_Central"/>
</dbReference>
<dbReference type="GO" id="GO:0046982">
    <property type="term" value="F:protein heterodimerization activity"/>
    <property type="evidence" value="ECO:0000250"/>
    <property type="project" value="UniProtKB"/>
</dbReference>
<dbReference type="GO" id="GO:0030280">
    <property type="term" value="F:structural constituent of skin epidermis"/>
    <property type="evidence" value="ECO:0000318"/>
    <property type="project" value="GO_Central"/>
</dbReference>
<dbReference type="GO" id="GO:0045109">
    <property type="term" value="P:intermediate filament organization"/>
    <property type="evidence" value="ECO:0000318"/>
    <property type="project" value="GO_Central"/>
</dbReference>
<dbReference type="GO" id="GO:0031424">
    <property type="term" value="P:keratinization"/>
    <property type="evidence" value="ECO:0000318"/>
    <property type="project" value="GO_Central"/>
</dbReference>
<dbReference type="GO" id="GO:0051290">
    <property type="term" value="P:protein heterotetramerization"/>
    <property type="evidence" value="ECO:0000250"/>
    <property type="project" value="UniProtKB"/>
</dbReference>
<dbReference type="FunFam" id="1.20.5.1160:FF:000001">
    <property type="entry name" value="Keratin type II"/>
    <property type="match status" value="1"/>
</dbReference>
<dbReference type="FunFam" id="1.20.5.170:FF:000065">
    <property type="entry name" value="Keratin, type II cytoskeletal 80"/>
    <property type="match status" value="1"/>
</dbReference>
<dbReference type="FunFam" id="1.20.5.500:FF:000001">
    <property type="entry name" value="Type II keratin 23"/>
    <property type="match status" value="1"/>
</dbReference>
<dbReference type="Gene3D" id="1.20.5.170">
    <property type="match status" value="1"/>
</dbReference>
<dbReference type="Gene3D" id="1.20.5.500">
    <property type="entry name" value="Single helix bin"/>
    <property type="match status" value="1"/>
</dbReference>
<dbReference type="Gene3D" id="1.20.5.1160">
    <property type="entry name" value="Vasodilator-stimulated phosphoprotein"/>
    <property type="match status" value="1"/>
</dbReference>
<dbReference type="InterPro" id="IPR018039">
    <property type="entry name" value="IF_conserved"/>
</dbReference>
<dbReference type="InterPro" id="IPR039008">
    <property type="entry name" value="IF_rod_dom"/>
</dbReference>
<dbReference type="InterPro" id="IPR003054">
    <property type="entry name" value="Keratin_II"/>
</dbReference>
<dbReference type="PANTHER" id="PTHR45616">
    <property type="entry name" value="GATA-TYPE DOMAIN-CONTAINING PROTEIN"/>
    <property type="match status" value="1"/>
</dbReference>
<dbReference type="PANTHER" id="PTHR45616:SF66">
    <property type="entry name" value="KERATIN, TYPE II CYTOSKELETAL I"/>
    <property type="match status" value="1"/>
</dbReference>
<dbReference type="Pfam" id="PF00038">
    <property type="entry name" value="Filament"/>
    <property type="match status" value="1"/>
</dbReference>
<dbReference type="PRINTS" id="PR01276">
    <property type="entry name" value="TYPE2KERATIN"/>
</dbReference>
<dbReference type="SMART" id="SM01391">
    <property type="entry name" value="Filament"/>
    <property type="match status" value="1"/>
</dbReference>
<dbReference type="SUPFAM" id="SSF64593">
    <property type="entry name" value="Intermediate filament protein, coiled coil region"/>
    <property type="match status" value="2"/>
</dbReference>
<dbReference type="PROSITE" id="PS00226">
    <property type="entry name" value="IF_ROD_1"/>
    <property type="match status" value="1"/>
</dbReference>
<dbReference type="PROSITE" id="PS51842">
    <property type="entry name" value="IF_ROD_2"/>
    <property type="match status" value="1"/>
</dbReference>
<organism>
    <name type="scientific">Xenopus laevis</name>
    <name type="common">African clawed frog</name>
    <dbReference type="NCBI Taxonomy" id="8355"/>
    <lineage>
        <taxon>Eukaryota</taxon>
        <taxon>Metazoa</taxon>
        <taxon>Chordata</taxon>
        <taxon>Craniata</taxon>
        <taxon>Vertebrata</taxon>
        <taxon>Euteleostomi</taxon>
        <taxon>Amphibia</taxon>
        <taxon>Batrachia</taxon>
        <taxon>Anura</taxon>
        <taxon>Pipoidea</taxon>
        <taxon>Pipidae</taxon>
        <taxon>Xenopodinae</taxon>
        <taxon>Xenopus</taxon>
        <taxon>Xenopus</taxon>
    </lineage>
</organism>
<protein>
    <recommendedName>
        <fullName>Keratin, type II cytoskeletal I</fullName>
    </recommendedName>
    <alternativeName>
        <fullName>Clone PUF23</fullName>
    </alternativeName>
</protein>
<keyword id="KW-0175">Coiled coil</keyword>
<keyword id="KW-0403">Intermediate filament</keyword>
<keyword id="KW-0416">Keratin</keyword>
<keyword id="KW-1185">Reference proteome</keyword>
<comment type="subunit">
    <text>Heterotetramer of two type I and two type II keratins.</text>
</comment>
<comment type="miscellaneous">
    <text>There are two types of cytoskeletal and microfibrillar keratin: I (acidic; 40-55 kDa) and II (neutral to basic; 56-70 kDa).</text>
</comment>
<comment type="similarity">
    <text evidence="1">Belongs to the intermediate filament family.</text>
</comment>
<evidence type="ECO:0000255" key="1">
    <source>
        <dbReference type="PROSITE-ProRule" id="PRU01188"/>
    </source>
</evidence>
<sequence>FLEQQNKVLETKWKLLQEQGTKGTTKRANLDPLFEKYIADLKKYLDNLISEKGRLQQELKNLQLLVEDYKKKYEDEINKRTKAENDFVLLKKDVDAAYMVKTELEAKVDTLTSEINFLRTRDAAELSQVHDQVTDTSVVLTMDNNRDLNLDSIIKEVKCQYEQIAQRSKLEAEALYDQKYKQLQQTVEGHGDSIKNSKTEISDLNRKIQRLKAEIENVKKQIASLNQSIAGAEERGNLSLKDAEKKLKDLEDAERKLKADMARQLKEYQELMSAKLALNLEISTYRYMLEGEEGRISGQIVNKVSISVLSGGSSVYTALGGAAGGMGGGGGGGMGSGHGGGYGGMVFGGGMGCGMGDGMGGGGMGGGMGSGHGGGYGHGGAVCFGAGGMGYEGGSMHGGGSSYGHSGGKTSVAIASTTSTTKKTY</sequence>
<accession>P04266</accession>
<feature type="chain" id="PRO_0000063718" description="Keratin, type II cytoskeletal I">
    <location>
        <begin position="1" status="less than"/>
        <end position="425"/>
    </location>
</feature>
<feature type="domain" description="IF rod" evidence="1">
    <location>
        <begin position="1" status="less than"/>
        <end position="296"/>
    </location>
</feature>
<feature type="region of interest" description="Coil 1A">
    <location>
        <begin position="1" status="less than"/>
        <end position="16"/>
    </location>
</feature>
<feature type="region of interest" description="Linker 1">
    <location>
        <begin position="17"/>
        <end position="37"/>
    </location>
</feature>
<feature type="region of interest" description="Coil 1B">
    <location>
        <begin position="38"/>
        <end position="129"/>
    </location>
</feature>
<feature type="region of interest" description="Linker 12">
    <location>
        <begin position="130"/>
        <end position="153"/>
    </location>
</feature>
<feature type="region of interest" description="Coil 2">
    <location>
        <begin position="154"/>
        <end position="292"/>
    </location>
</feature>
<feature type="region of interest" description="Tail">
    <location>
        <begin position="293"/>
        <end position="425"/>
    </location>
</feature>
<feature type="site" description="Stutter">
    <location>
        <position position="236"/>
    </location>
</feature>
<feature type="non-terminal residue">
    <location>
        <position position="1"/>
    </location>
</feature>
<name>K2C1_XENLA</name>
<proteinExistence type="evidence at transcript level"/>
<reference key="1">
    <citation type="journal article" date="1985" name="J. Mol. Biol.">
        <title>Amino acid sequence microheterogeneities of basic (type II) cytokeratins of Xenopus laevis epidermis and evolutionary conservativity of helical and non-helical domains.</title>
        <authorList>
            <person name="Hoffmann W."/>
            <person name="Franz J.K."/>
            <person name="Franke W.W."/>
        </authorList>
    </citation>
    <scope>NUCLEOTIDE SEQUENCE [MRNA]</scope>
</reference>